<keyword id="KW-1185">Reference proteome</keyword>
<keyword id="KW-0687">Ribonucleoprotein</keyword>
<keyword id="KW-0689">Ribosomal protein</keyword>
<dbReference type="EMBL" id="CR954253">
    <property type="protein sequence ID" value="CAI98282.1"/>
    <property type="molecule type" value="Genomic_DNA"/>
</dbReference>
<dbReference type="SMR" id="Q1G9D2"/>
<dbReference type="STRING" id="390333.Ldb1482"/>
<dbReference type="KEGG" id="ldb:Ldb1482"/>
<dbReference type="eggNOG" id="COG0267">
    <property type="taxonomic scope" value="Bacteria"/>
</dbReference>
<dbReference type="HOGENOM" id="CLU_190949_0_2_9"/>
<dbReference type="BioCyc" id="LDEL390333:LDB_RS10190-MONOMER"/>
<dbReference type="Proteomes" id="UP000001259">
    <property type="component" value="Chromosome"/>
</dbReference>
<dbReference type="GO" id="GO:0005737">
    <property type="term" value="C:cytoplasm"/>
    <property type="evidence" value="ECO:0007669"/>
    <property type="project" value="UniProtKB-ARBA"/>
</dbReference>
<dbReference type="GO" id="GO:1990904">
    <property type="term" value="C:ribonucleoprotein complex"/>
    <property type="evidence" value="ECO:0007669"/>
    <property type="project" value="UniProtKB-KW"/>
</dbReference>
<dbReference type="GO" id="GO:0005840">
    <property type="term" value="C:ribosome"/>
    <property type="evidence" value="ECO:0007669"/>
    <property type="project" value="UniProtKB-KW"/>
</dbReference>
<dbReference type="GO" id="GO:0003735">
    <property type="term" value="F:structural constituent of ribosome"/>
    <property type="evidence" value="ECO:0007669"/>
    <property type="project" value="InterPro"/>
</dbReference>
<dbReference type="GO" id="GO:0006412">
    <property type="term" value="P:translation"/>
    <property type="evidence" value="ECO:0007669"/>
    <property type="project" value="UniProtKB-UniRule"/>
</dbReference>
<dbReference type="Gene3D" id="2.20.28.120">
    <property type="entry name" value="Ribosomal protein L33"/>
    <property type="match status" value="1"/>
</dbReference>
<dbReference type="HAMAP" id="MF_00294">
    <property type="entry name" value="Ribosomal_bL33"/>
    <property type="match status" value="1"/>
</dbReference>
<dbReference type="InterPro" id="IPR001705">
    <property type="entry name" value="Ribosomal_bL33"/>
</dbReference>
<dbReference type="InterPro" id="IPR018264">
    <property type="entry name" value="Ribosomal_bL33_CS"/>
</dbReference>
<dbReference type="InterPro" id="IPR038584">
    <property type="entry name" value="Ribosomal_bL33_sf"/>
</dbReference>
<dbReference type="InterPro" id="IPR011332">
    <property type="entry name" value="Ribosomal_zn-bd"/>
</dbReference>
<dbReference type="NCBIfam" id="NF001764">
    <property type="entry name" value="PRK00504.1"/>
    <property type="match status" value="1"/>
</dbReference>
<dbReference type="NCBIfam" id="NF001860">
    <property type="entry name" value="PRK00595.1"/>
    <property type="match status" value="1"/>
</dbReference>
<dbReference type="NCBIfam" id="TIGR01023">
    <property type="entry name" value="rpmG_bact"/>
    <property type="match status" value="1"/>
</dbReference>
<dbReference type="PANTHER" id="PTHR43168">
    <property type="entry name" value="50S RIBOSOMAL PROTEIN L33, CHLOROPLASTIC"/>
    <property type="match status" value="1"/>
</dbReference>
<dbReference type="PANTHER" id="PTHR43168:SF2">
    <property type="entry name" value="LARGE RIBOSOMAL SUBUNIT PROTEIN BL33C"/>
    <property type="match status" value="1"/>
</dbReference>
<dbReference type="Pfam" id="PF00471">
    <property type="entry name" value="Ribosomal_L33"/>
    <property type="match status" value="1"/>
</dbReference>
<dbReference type="SUPFAM" id="SSF57829">
    <property type="entry name" value="Zn-binding ribosomal proteins"/>
    <property type="match status" value="1"/>
</dbReference>
<dbReference type="PROSITE" id="PS00582">
    <property type="entry name" value="RIBOSOMAL_L33"/>
    <property type="match status" value="1"/>
</dbReference>
<gene>
    <name evidence="1" type="primary">rpmG1</name>
    <name type="ordered locus">Ldb1482</name>
</gene>
<name>RL331_LACDA</name>
<proteinExistence type="inferred from homology"/>
<feature type="chain" id="PRO_0000356498" description="Large ribosomal subunit protein bL33A">
    <location>
        <begin position="1"/>
        <end position="49"/>
    </location>
</feature>
<comment type="similarity">
    <text evidence="1">Belongs to the bacterial ribosomal protein bL33 family.</text>
</comment>
<sequence>MADNIILECTECGDRSYLSKKNKRKHPERLTLKKYCPVERQVTLHRETK</sequence>
<accession>Q1G9D2</accession>
<protein>
    <recommendedName>
        <fullName evidence="1">Large ribosomal subunit protein bL33A</fullName>
    </recommendedName>
    <alternativeName>
        <fullName evidence="1">50S ribosomal protein L33 1</fullName>
    </alternativeName>
</protein>
<organism>
    <name type="scientific">Lactobacillus delbrueckii subsp. bulgaricus (strain ATCC 11842 / DSM 20081 / BCRC 10696 / JCM 1002 / NBRC 13953 / NCIMB 11778 / NCTC 12712 / WDCM 00102 / Lb 14)</name>
    <dbReference type="NCBI Taxonomy" id="390333"/>
    <lineage>
        <taxon>Bacteria</taxon>
        <taxon>Bacillati</taxon>
        <taxon>Bacillota</taxon>
        <taxon>Bacilli</taxon>
        <taxon>Lactobacillales</taxon>
        <taxon>Lactobacillaceae</taxon>
        <taxon>Lactobacillus</taxon>
    </lineage>
</organism>
<reference key="1">
    <citation type="journal article" date="2006" name="Proc. Natl. Acad. Sci. U.S.A.">
        <title>The complete genome sequence of Lactobacillus bulgaricus reveals extensive and ongoing reductive evolution.</title>
        <authorList>
            <person name="van de Guchte M."/>
            <person name="Penaud S."/>
            <person name="Grimaldi C."/>
            <person name="Barbe V."/>
            <person name="Bryson K."/>
            <person name="Nicolas P."/>
            <person name="Robert C."/>
            <person name="Oztas S."/>
            <person name="Mangenot S."/>
            <person name="Couloux A."/>
            <person name="Loux V."/>
            <person name="Dervyn R."/>
            <person name="Bossy R."/>
            <person name="Bolotin A."/>
            <person name="Batto J.-M."/>
            <person name="Walunas T."/>
            <person name="Gibrat J.-F."/>
            <person name="Bessieres P."/>
            <person name="Weissenbach J."/>
            <person name="Ehrlich S.D."/>
            <person name="Maguin E."/>
        </authorList>
    </citation>
    <scope>NUCLEOTIDE SEQUENCE [LARGE SCALE GENOMIC DNA]</scope>
    <source>
        <strain>ATCC 11842 / DSM 20081 / BCRC 10696 / JCM 1002 / NBRC 13953 / NCIMB 11778 / NCTC 12712 / WDCM 00102 / Lb 14</strain>
    </source>
</reference>
<evidence type="ECO:0000255" key="1">
    <source>
        <dbReference type="HAMAP-Rule" id="MF_00294"/>
    </source>
</evidence>